<name>AGAA_CORST</name>
<protein>
    <recommendedName>
        <fullName evidence="5">N(alpha)-acyl-glutamine aminoacylase</fullName>
        <shortName evidence="5">N-AGA</shortName>
        <ecNumber evidence="1 2 3">3.5.1.133</ecNumber>
    </recommendedName>
    <alternativeName>
        <fullName evidence="6">Axillary malodor releasing enzyme</fullName>
        <shortName evidence="6">AMRE</shortName>
    </alternativeName>
</protein>
<sequence length="400" mass="43494">MAQENLQKIVDSLESSRAEREELYKWFHQHPEMSMQEHETSKRIAEELEKLGLEPQNIGVTGQVAVIKNGEGPSVAFRADFDALPITENTGLDYSADPELGMMHACGHDLHTTALLGAVRALVENKDLWSGTFIAVHQPGEEGGGGARHMVDDGLAEKIAAPDVCFAQHVFNEDPAFGYVFTPGRFLTAASNWRIHIHGEGGHGSRPHLTKDPIVVAASIITKLQTIVSREVDPNEVAVVTVGSIEGGKSTNSIPYTVTLGVNTRASNDELSEYVQNAIKRIVIAECQAAGIEQEPEFEYLDSVPAVINDEDLTEQLMAQFREFFGEDQAVEIPPLSGSEDYPFIPNAWGVPSVMWGWSGFAAGSDAPGNHTDKFAPELPDALERGTQAILVAAAPWLMK</sequence>
<reference key="1">
    <citation type="journal article" date="2003" name="J. Biol. Chem.">
        <title>A specific bacterial aminoacylase cleaves odorant precursors secreted in the human axilla.</title>
        <authorList>
            <person name="Natsch A."/>
            <person name="Gfeller H."/>
            <person name="Gygax P."/>
            <person name="Schmid J."/>
            <person name="Acuna G."/>
        </authorList>
    </citation>
    <scope>NUCLEOTIDE SEQUENCE [GENOMIC DNA]</scope>
    <scope>PROTEIN SEQUENCE OF 2-37</scope>
    <scope>FUNCTION</scope>
    <scope>CATALYTIC ACTIVITY</scope>
    <scope>COFACTOR</scope>
    <scope>ACTIVITY REGULATION</scope>
    <scope>BIOPHYSICOCHEMICAL PROPERTIES</scope>
    <source>
        <strain>Ax20</strain>
    </source>
</reference>
<reference key="2">
    <citation type="journal article" date="2005" name="Int. J. Cosmet. Sci.">
        <title>Isolation of a bacterial enzyme releasing axillary malodor and its use as a screening target for novel deodorant formulations.</title>
        <authorList>
            <person name="Natsch A."/>
            <person name="Gfeller H."/>
            <person name="Gygax P."/>
            <person name="Schmid J."/>
        </authorList>
    </citation>
    <scope>FUNCTION</scope>
    <scope>CATALYTIC ACTIVITY</scope>
    <scope>COFACTOR</scope>
    <scope>BIOTECHNOLOGY</scope>
    <source>
        <strain>Ax20</strain>
    </source>
</reference>
<reference key="3">
    <citation type="journal article" date="2006" name="Chem. Biodivers.">
        <title>A broad diversity of volatile carboxylic acids, released by a bacterial aminoacylase from axilla secretions, as candidate molecules for the determination of human-body odor type.</title>
        <authorList>
            <person name="Natsch A."/>
            <person name="Derrer S."/>
            <person name="Flachsmann F."/>
            <person name="Schmid J."/>
        </authorList>
    </citation>
    <scope>FUNCTION</scope>
    <scope>CATALYTIC ACTIVITY</scope>
    <scope>COFACTOR</scope>
    <scope>BIOPHYSICOCHEMICAL PROPERTIES</scope>
    <source>
        <strain>Ax20</strain>
    </source>
</reference>
<gene>
    <name evidence="4" type="primary">agaA</name>
</gene>
<proteinExistence type="evidence at protein level"/>
<dbReference type="EC" id="3.5.1.133" evidence="1 2 3"/>
<dbReference type="EMBL" id="AF534871">
    <property type="protein sequence ID" value="AAN77164.1"/>
    <property type="molecule type" value="Genomic_DNA"/>
</dbReference>
<dbReference type="PDB" id="6SLF">
    <property type="method" value="X-ray"/>
    <property type="resolution" value="1.75 A"/>
    <property type="chains" value="A/B/C/D=1-400"/>
</dbReference>
<dbReference type="PDBsum" id="6SLF"/>
<dbReference type="SMR" id="Q8GGD4"/>
<dbReference type="KEGG" id="ag:AAN77164"/>
<dbReference type="BioCyc" id="MetaCyc:MONOMER-20502"/>
<dbReference type="GO" id="GO:0016787">
    <property type="term" value="F:hydrolase activity"/>
    <property type="evidence" value="ECO:0007669"/>
    <property type="project" value="UniProtKB-KW"/>
</dbReference>
<dbReference type="CDD" id="cd05664">
    <property type="entry name" value="M20_Acy1-like"/>
    <property type="match status" value="1"/>
</dbReference>
<dbReference type="FunFam" id="3.30.70.360:FF:000001">
    <property type="entry name" value="N-acetyldiaminopimelate deacetylase"/>
    <property type="match status" value="1"/>
</dbReference>
<dbReference type="Gene3D" id="3.30.70.360">
    <property type="match status" value="1"/>
</dbReference>
<dbReference type="Gene3D" id="3.40.630.10">
    <property type="entry name" value="Zn peptidases"/>
    <property type="match status" value="1"/>
</dbReference>
<dbReference type="InterPro" id="IPR017439">
    <property type="entry name" value="Amidohydrolase"/>
</dbReference>
<dbReference type="InterPro" id="IPR036264">
    <property type="entry name" value="Bact_exopeptidase_dim_dom"/>
</dbReference>
<dbReference type="InterPro" id="IPR002933">
    <property type="entry name" value="Peptidase_M20"/>
</dbReference>
<dbReference type="InterPro" id="IPR011650">
    <property type="entry name" value="Peptidase_M20_dimer"/>
</dbReference>
<dbReference type="NCBIfam" id="TIGR01891">
    <property type="entry name" value="amidohydrolases"/>
    <property type="match status" value="1"/>
</dbReference>
<dbReference type="PANTHER" id="PTHR11014:SF63">
    <property type="entry name" value="METALLOPEPTIDASE, PUTATIVE (AFU_ORTHOLOGUE AFUA_6G09600)-RELATED"/>
    <property type="match status" value="1"/>
</dbReference>
<dbReference type="PANTHER" id="PTHR11014">
    <property type="entry name" value="PEPTIDASE M20 FAMILY MEMBER"/>
    <property type="match status" value="1"/>
</dbReference>
<dbReference type="Pfam" id="PF07687">
    <property type="entry name" value="M20_dimer"/>
    <property type="match status" value="1"/>
</dbReference>
<dbReference type="Pfam" id="PF01546">
    <property type="entry name" value="Peptidase_M20"/>
    <property type="match status" value="1"/>
</dbReference>
<dbReference type="PIRSF" id="PIRSF005962">
    <property type="entry name" value="Pept_M20D_amidohydro"/>
    <property type="match status" value="1"/>
</dbReference>
<dbReference type="SUPFAM" id="SSF55031">
    <property type="entry name" value="Bacterial exopeptidase dimerisation domain"/>
    <property type="match status" value="1"/>
</dbReference>
<dbReference type="SUPFAM" id="SSF53187">
    <property type="entry name" value="Zn-dependent exopeptidases"/>
    <property type="match status" value="1"/>
</dbReference>
<comment type="function">
    <text evidence="1 2 3">Hydrolyzes odorless N-alpha-acyl-L-glutamine conjugates of short- and medium-chain fatty acids, releasing human axillary malodor compounds (PubMed:12468539, PubMed:17193210, PubMed:18492161). The enzyme is highly specific for the glutamine residue but has a low specificity for the acyl part of the substrate (PubMed:12468539, PubMed:17193210, PubMed:18492161). The two most common products are 3-methyl-2-hexenoic acid (3M2H) and 3-hydroxy-3-methyl-hexanoic acid (HMHA), which are produced from the odorless precursors N-alpha-3-methyl-2-hexenoyl-L-glutamine (3M2H-Gln) and N-alpha-3-hydroxy-3-methylhexanoyl-L-glutamine (HMHA-Gln) (PubMed:12468539, PubMed:17193210, PubMed:18492161). In addition, over 28 different carboxylic acids contributing to human body odor are released by this enzyme from odorless axilla secretions, including several aliphatic 3-hydroxy acids with 4-Me branches, 3,4-unsaturated, 4-Et-branched aliphatic acids, and a variety of degradation products of amino acids (PubMed:17193210).</text>
</comment>
<comment type="catalytic activity">
    <reaction evidence="1 2 3">
        <text>an N(2)-acyl-L-glutamine + H2O = a carboxylate + L-glutamine</text>
        <dbReference type="Rhea" id="RHEA:59984"/>
        <dbReference type="ChEBI" id="CHEBI:15377"/>
        <dbReference type="ChEBI" id="CHEBI:29067"/>
        <dbReference type="ChEBI" id="CHEBI:58359"/>
        <dbReference type="ChEBI" id="CHEBI:87584"/>
        <dbReference type="EC" id="3.5.1.133"/>
    </reaction>
</comment>
<comment type="catalytic activity">
    <reaction evidence="1 2 3">
        <text>N(2)-[(2E)-3-methylhex-2-enoyl]-L-glutaminate + H2O = (2E)-3-methylhex-2-enoate + L-glutamine</text>
        <dbReference type="Rhea" id="RHEA:60040"/>
        <dbReference type="ChEBI" id="CHEBI:15377"/>
        <dbReference type="ChEBI" id="CHEBI:58359"/>
        <dbReference type="ChEBI" id="CHEBI:143557"/>
        <dbReference type="ChEBI" id="CHEBI:143558"/>
        <dbReference type="EC" id="3.5.1.133"/>
    </reaction>
</comment>
<comment type="catalytic activity">
    <reaction evidence="1 2 3">
        <text>N(2)-(3-hydroxy-3-methylhexanoyl)-L-glutaminate + H2O = 3-hydroxy-3-methylhexanoate + L-glutamine</text>
        <dbReference type="Rhea" id="RHEA:60036"/>
        <dbReference type="ChEBI" id="CHEBI:15377"/>
        <dbReference type="ChEBI" id="CHEBI:58359"/>
        <dbReference type="ChEBI" id="CHEBI:143555"/>
        <dbReference type="ChEBI" id="CHEBI:143556"/>
        <dbReference type="EC" id="3.5.1.133"/>
    </reaction>
</comment>
<comment type="cofactor">
    <cofactor evidence="1 2 3">
        <name>Zn(2+)</name>
        <dbReference type="ChEBI" id="CHEBI:29105"/>
    </cofactor>
</comment>
<comment type="activity regulation">
    <text evidence="1">Partial loss of activity with the combination Mn(2+) and chelating agents. Activity is lost in presence of 0.5 mM dithiothreitol.</text>
</comment>
<comment type="biophysicochemical properties">
    <kinetics>
        <KM evidence="1">0.2 mM for 3M2H-Gln</KM>
        <KM evidence="1">0.74 mM for HMHA-Gln</KM>
        <KM evidence="1">0.08 mM for N-alpha-decanoyl-L-glutamine</KM>
        <KM evidence="1">0.06 mM for N-alpha-lauroyl-L-glutamine</KM>
        <KM evidence="1">0.05 mM for carbobenzyloxy-L-glutamine</KM>
        <KM evidence="2">0.115 mM for N2-[(3E)-4-methyloct-3-enoyl]-L-glutamine</KM>
        <KM evidence="2">0.25 mM for N2-[(3S)-3-hydroxy-4-methylheptanoyl]glutamine</KM>
        <Vmax evidence="1">0.121 mmol/min/mg enzyme with 3M2H-Gln as substrate</Vmax>
        <Vmax evidence="1">0.461 mmol/min/mg enzyme with HMHA-Gln as substrate</Vmax>
        <Vmax evidence="1">0.752 mmol/min/mg enzyme with N-alpha-decanoyl-L-glutamine as substrate</Vmax>
        <Vmax evidence="1">0.325 mmol/min/mg enzyme with N-alpha-lauroyl-L-glutamine as substrate</Vmax>
        <Vmax evidence="1">0.065 mmol/min/mg enzyme with carbobenzyloxy-L-glutamine as substrate</Vmax>
        <Vmax evidence="2">0.83 mmol/min/mg enzyme with N2-[(3E)-4-methyloct-3-enoyl]-L-glutamine as substrate</Vmax>
        <Vmax evidence="2">0.51 mmol/min/mg enzyme with N2-[(3S)-3-hydroxy-4-methylheptanoyl]glutamine as substrate</Vmax>
    </kinetics>
</comment>
<comment type="biotechnology">
    <text evidence="3">The elucidation of the enzymatic mechanisms of malodor formation may lead to completely new ways to design deodorant actives. A targeted approach to block the enzymatic process offers the possibility of an efficient treatment without perturbation of the resident skin microflora. The enzyme could also be fed with alternative substrates which are designed to release a fragrance note instead of the malodor.</text>
</comment>
<comment type="similarity">
    <text evidence="7">Belongs to the peptidase M20 family.</text>
</comment>
<feature type="initiator methionine" description="Removed" evidence="1">
    <location>
        <position position="1"/>
    </location>
</feature>
<feature type="chain" id="PRO_0000450523" description="N(alpha)-acyl-glutamine aminoacylase">
    <location>
        <begin position="2"/>
        <end position="400"/>
    </location>
</feature>
<feature type="helix" evidence="8">
    <location>
        <begin position="4"/>
        <end position="29"/>
    </location>
</feature>
<feature type="helix" evidence="8">
    <location>
        <begin position="38"/>
        <end position="50"/>
    </location>
</feature>
<feature type="strand" evidence="8">
    <location>
        <begin position="63"/>
        <end position="72"/>
    </location>
</feature>
<feature type="strand" evidence="8">
    <location>
        <begin position="74"/>
        <end position="80"/>
    </location>
</feature>
<feature type="helix" evidence="8">
    <location>
        <begin position="98"/>
        <end position="100"/>
    </location>
</feature>
<feature type="helix" evidence="8">
    <location>
        <begin position="108"/>
        <end position="124"/>
    </location>
</feature>
<feature type="helix" evidence="8">
    <location>
        <begin position="125"/>
        <end position="128"/>
    </location>
</feature>
<feature type="strand" evidence="8">
    <location>
        <begin position="131"/>
        <end position="138"/>
    </location>
</feature>
<feature type="turn" evidence="8">
    <location>
        <begin position="141"/>
        <end position="143"/>
    </location>
</feature>
<feature type="helix" evidence="8">
    <location>
        <begin position="146"/>
        <end position="152"/>
    </location>
</feature>
<feature type="helix" evidence="8">
    <location>
        <begin position="155"/>
        <end position="158"/>
    </location>
</feature>
<feature type="strand" evidence="8">
    <location>
        <begin position="163"/>
        <end position="172"/>
    </location>
</feature>
<feature type="strand" evidence="8">
    <location>
        <begin position="179"/>
        <end position="181"/>
    </location>
</feature>
<feature type="strand" evidence="8">
    <location>
        <begin position="183"/>
        <end position="185"/>
    </location>
</feature>
<feature type="strand" evidence="8">
    <location>
        <begin position="189"/>
        <end position="198"/>
    </location>
</feature>
<feature type="helix" evidence="8">
    <location>
        <begin position="207"/>
        <end position="209"/>
    </location>
</feature>
<feature type="helix" evidence="8">
    <location>
        <begin position="213"/>
        <end position="224"/>
    </location>
</feature>
<feature type="helix" evidence="8">
    <location>
        <begin position="226"/>
        <end position="230"/>
    </location>
</feature>
<feature type="strand" evidence="8">
    <location>
        <begin position="238"/>
        <end position="247"/>
    </location>
</feature>
<feature type="strand" evidence="8">
    <location>
        <begin position="256"/>
        <end position="268"/>
    </location>
</feature>
<feature type="helix" evidence="8">
    <location>
        <begin position="269"/>
        <end position="289"/>
    </location>
</feature>
<feature type="strand" evidence="8">
    <location>
        <begin position="297"/>
        <end position="304"/>
    </location>
</feature>
<feature type="helix" evidence="8">
    <location>
        <begin position="311"/>
        <end position="325"/>
    </location>
</feature>
<feature type="helix" evidence="8">
    <location>
        <begin position="327"/>
        <end position="329"/>
    </location>
</feature>
<feature type="strand" evidence="8">
    <location>
        <begin position="330"/>
        <end position="332"/>
    </location>
</feature>
<feature type="helix" evidence="8">
    <location>
        <begin position="344"/>
        <end position="349"/>
    </location>
</feature>
<feature type="strand" evidence="8">
    <location>
        <begin position="353"/>
        <end position="359"/>
    </location>
</feature>
<feature type="helix" evidence="8">
    <location>
        <begin position="364"/>
        <end position="366"/>
    </location>
</feature>
<feature type="helix" evidence="8">
    <location>
        <begin position="381"/>
        <end position="398"/>
    </location>
</feature>
<accession>Q8GGD4</accession>
<evidence type="ECO:0000269" key="1">
    <source>
    </source>
</evidence>
<evidence type="ECO:0000269" key="2">
    <source>
    </source>
</evidence>
<evidence type="ECO:0000269" key="3">
    <source>
    </source>
</evidence>
<evidence type="ECO:0000303" key="4">
    <source>
    </source>
</evidence>
<evidence type="ECO:0000303" key="5">
    <source>
    </source>
</evidence>
<evidence type="ECO:0000303" key="6">
    <source>
    </source>
</evidence>
<evidence type="ECO:0000305" key="7"/>
<evidence type="ECO:0007829" key="8">
    <source>
        <dbReference type="PDB" id="6SLF"/>
    </source>
</evidence>
<organism>
    <name type="scientific">Corynebacterium striatum</name>
    <dbReference type="NCBI Taxonomy" id="43770"/>
    <lineage>
        <taxon>Bacteria</taxon>
        <taxon>Bacillati</taxon>
        <taxon>Actinomycetota</taxon>
        <taxon>Actinomycetes</taxon>
        <taxon>Mycobacteriales</taxon>
        <taxon>Corynebacteriaceae</taxon>
        <taxon>Corynebacterium</taxon>
    </lineage>
</organism>
<keyword id="KW-0002">3D-structure</keyword>
<keyword id="KW-0903">Direct protein sequencing</keyword>
<keyword id="KW-0378">Hydrolase</keyword>